<name>METK_MYCPN</name>
<accession>P78003</accession>
<dbReference type="EC" id="2.5.1.6" evidence="1"/>
<dbReference type="EMBL" id="U00089">
    <property type="protein sequence ID" value="AAB95742.1"/>
    <property type="molecule type" value="Genomic_DNA"/>
</dbReference>
<dbReference type="PIR" id="S73420">
    <property type="entry name" value="S73420"/>
</dbReference>
<dbReference type="RefSeq" id="NP_109748.1">
    <property type="nucleotide sequence ID" value="NC_000912.1"/>
</dbReference>
<dbReference type="RefSeq" id="WP_010874417.1">
    <property type="nucleotide sequence ID" value="NZ_OU342337.1"/>
</dbReference>
<dbReference type="SMR" id="P78003"/>
<dbReference type="IntAct" id="P78003">
    <property type="interactions" value="2"/>
</dbReference>
<dbReference type="STRING" id="272634.MPN_060"/>
<dbReference type="EnsemblBacteria" id="AAB95742">
    <property type="protein sequence ID" value="AAB95742"/>
    <property type="gene ID" value="MPN_060"/>
</dbReference>
<dbReference type="GeneID" id="66609299"/>
<dbReference type="KEGG" id="mpn:MPN_060"/>
<dbReference type="PATRIC" id="fig|272634.6.peg.60"/>
<dbReference type="HOGENOM" id="CLU_041802_1_1_14"/>
<dbReference type="OrthoDB" id="9801686at2"/>
<dbReference type="BioCyc" id="MPNE272634:G1GJ3-95-MONOMER"/>
<dbReference type="UniPathway" id="UPA00315">
    <property type="reaction ID" value="UER00080"/>
</dbReference>
<dbReference type="Proteomes" id="UP000000808">
    <property type="component" value="Chromosome"/>
</dbReference>
<dbReference type="GO" id="GO:0005737">
    <property type="term" value="C:cytoplasm"/>
    <property type="evidence" value="ECO:0007669"/>
    <property type="project" value="UniProtKB-SubCell"/>
</dbReference>
<dbReference type="GO" id="GO:0005524">
    <property type="term" value="F:ATP binding"/>
    <property type="evidence" value="ECO:0007669"/>
    <property type="project" value="UniProtKB-UniRule"/>
</dbReference>
<dbReference type="GO" id="GO:0000287">
    <property type="term" value="F:magnesium ion binding"/>
    <property type="evidence" value="ECO:0007669"/>
    <property type="project" value="UniProtKB-UniRule"/>
</dbReference>
<dbReference type="GO" id="GO:0004478">
    <property type="term" value="F:methionine adenosyltransferase activity"/>
    <property type="evidence" value="ECO:0007669"/>
    <property type="project" value="UniProtKB-UniRule"/>
</dbReference>
<dbReference type="GO" id="GO:0006730">
    <property type="term" value="P:one-carbon metabolic process"/>
    <property type="evidence" value="ECO:0007669"/>
    <property type="project" value="UniProtKB-KW"/>
</dbReference>
<dbReference type="GO" id="GO:0006556">
    <property type="term" value="P:S-adenosylmethionine biosynthetic process"/>
    <property type="evidence" value="ECO:0007669"/>
    <property type="project" value="UniProtKB-UniRule"/>
</dbReference>
<dbReference type="CDD" id="cd18079">
    <property type="entry name" value="S-AdoMet_synt"/>
    <property type="match status" value="1"/>
</dbReference>
<dbReference type="Gene3D" id="3.30.300.10">
    <property type="match status" value="3"/>
</dbReference>
<dbReference type="HAMAP" id="MF_00086">
    <property type="entry name" value="S_AdoMet_synth1"/>
    <property type="match status" value="1"/>
</dbReference>
<dbReference type="InterPro" id="IPR022631">
    <property type="entry name" value="ADOMET_SYNTHASE_CS"/>
</dbReference>
<dbReference type="InterPro" id="IPR022630">
    <property type="entry name" value="S-AdoMet_synt_C"/>
</dbReference>
<dbReference type="InterPro" id="IPR022629">
    <property type="entry name" value="S-AdoMet_synt_central"/>
</dbReference>
<dbReference type="InterPro" id="IPR022628">
    <property type="entry name" value="S-AdoMet_synt_N"/>
</dbReference>
<dbReference type="InterPro" id="IPR002133">
    <property type="entry name" value="S-AdoMet_synthetase"/>
</dbReference>
<dbReference type="InterPro" id="IPR022636">
    <property type="entry name" value="S-AdoMet_synthetase_sfam"/>
</dbReference>
<dbReference type="NCBIfam" id="TIGR01034">
    <property type="entry name" value="metK"/>
    <property type="match status" value="1"/>
</dbReference>
<dbReference type="PANTHER" id="PTHR11964">
    <property type="entry name" value="S-ADENOSYLMETHIONINE SYNTHETASE"/>
    <property type="match status" value="1"/>
</dbReference>
<dbReference type="Pfam" id="PF02773">
    <property type="entry name" value="S-AdoMet_synt_C"/>
    <property type="match status" value="1"/>
</dbReference>
<dbReference type="Pfam" id="PF02772">
    <property type="entry name" value="S-AdoMet_synt_M"/>
    <property type="match status" value="1"/>
</dbReference>
<dbReference type="Pfam" id="PF00438">
    <property type="entry name" value="S-AdoMet_synt_N"/>
    <property type="match status" value="1"/>
</dbReference>
<dbReference type="PIRSF" id="PIRSF000497">
    <property type="entry name" value="MAT"/>
    <property type="match status" value="1"/>
</dbReference>
<dbReference type="SUPFAM" id="SSF55973">
    <property type="entry name" value="S-adenosylmethionine synthetase"/>
    <property type="match status" value="3"/>
</dbReference>
<dbReference type="PROSITE" id="PS00376">
    <property type="entry name" value="ADOMET_SYNTHASE_1"/>
    <property type="match status" value="1"/>
</dbReference>
<dbReference type="PROSITE" id="PS00377">
    <property type="entry name" value="ADOMET_SYNTHASE_2"/>
    <property type="match status" value="1"/>
</dbReference>
<protein>
    <recommendedName>
        <fullName evidence="1">S-adenosylmethionine synthase</fullName>
        <shortName evidence="1">AdoMet synthase</shortName>
        <ecNumber evidence="1">2.5.1.6</ecNumber>
    </recommendedName>
    <alternativeName>
        <fullName evidence="1">MAT</fullName>
    </alternativeName>
    <alternativeName>
        <fullName evidence="1">Methionine adenosyltransferase</fullName>
    </alternativeName>
</protein>
<evidence type="ECO:0000255" key="1">
    <source>
        <dbReference type="HAMAP-Rule" id="MF_00086"/>
    </source>
</evidence>
<gene>
    <name evidence="1" type="primary">metK</name>
    <name type="synonym">metX</name>
    <name type="ordered locus">MPN_060</name>
    <name type="ORF">MP094</name>
</gene>
<comment type="function">
    <text evidence="1">Catalyzes the formation of S-adenosylmethionine (AdoMet) from methionine and ATP. The overall synthetic reaction is composed of two sequential steps, AdoMet formation and the subsequent tripolyphosphate hydrolysis which occurs prior to release of AdoMet from the enzyme.</text>
</comment>
<comment type="catalytic activity">
    <reaction evidence="1">
        <text>L-methionine + ATP + H2O = S-adenosyl-L-methionine + phosphate + diphosphate</text>
        <dbReference type="Rhea" id="RHEA:21080"/>
        <dbReference type="ChEBI" id="CHEBI:15377"/>
        <dbReference type="ChEBI" id="CHEBI:30616"/>
        <dbReference type="ChEBI" id="CHEBI:33019"/>
        <dbReference type="ChEBI" id="CHEBI:43474"/>
        <dbReference type="ChEBI" id="CHEBI:57844"/>
        <dbReference type="ChEBI" id="CHEBI:59789"/>
        <dbReference type="EC" id="2.5.1.6"/>
    </reaction>
</comment>
<comment type="cofactor">
    <cofactor evidence="1">
        <name>Mg(2+)</name>
        <dbReference type="ChEBI" id="CHEBI:18420"/>
    </cofactor>
    <text evidence="1">Binds 2 divalent ions per subunit.</text>
</comment>
<comment type="cofactor">
    <cofactor evidence="1">
        <name>K(+)</name>
        <dbReference type="ChEBI" id="CHEBI:29103"/>
    </cofactor>
    <text evidence="1">Binds 1 potassium ion per subunit.</text>
</comment>
<comment type="pathway">
    <text evidence="1">Amino-acid biosynthesis; S-adenosyl-L-methionine biosynthesis; S-adenosyl-L-methionine from L-methionine: step 1/1.</text>
</comment>
<comment type="subunit">
    <text evidence="1">Homotetramer; dimer of dimers.</text>
</comment>
<comment type="subcellular location">
    <subcellularLocation>
        <location evidence="1">Cytoplasm</location>
    </subcellularLocation>
</comment>
<comment type="similarity">
    <text evidence="1">Belongs to the AdoMet synthase family.</text>
</comment>
<organism>
    <name type="scientific">Mycoplasma pneumoniae (strain ATCC 29342 / M129 / Subtype 1)</name>
    <name type="common">Mycoplasmoides pneumoniae</name>
    <dbReference type="NCBI Taxonomy" id="272634"/>
    <lineage>
        <taxon>Bacteria</taxon>
        <taxon>Bacillati</taxon>
        <taxon>Mycoplasmatota</taxon>
        <taxon>Mycoplasmoidales</taxon>
        <taxon>Mycoplasmoidaceae</taxon>
        <taxon>Mycoplasmoides</taxon>
    </lineage>
</organism>
<sequence>MAKTIKHPRWGRYVAEAVGRGHPDKICDQIADSILDECIKQSPTSHVACEVFASKNLIMVGGEILTTGYVDVVQTGWKVLNRLGYTENDFSFLSCINSQSSEINQAVQSNDEIGAGDQGITVGYACSETEQLMPLGSIVAQALVQRAARIIDQYPFIKHDMKSQVVLNYTGNKVQCESVLMSVQHTQDVSLDQLRQTIINQVILPVLTEYGLNDPKIKHLVNPGGSFVVGGPMADTGLTGRKIIVDTYGPYANHGGGSFSGKDPTKVDRTGAYFARFIAKHIVSLGWAEECEVSISWVFSQPLPQSIQVKCFNINKEFSEQLINQVISQYFNWSVAKIIAKLKLLDQVEYFRYAVYGHFGHQTAPWEQLSERDSLQCLIKNFQ</sequence>
<feature type="chain" id="PRO_0000174553" description="S-adenosylmethionine synthase">
    <location>
        <begin position="1"/>
        <end position="383"/>
    </location>
</feature>
<feature type="region of interest" description="Flexible loop" evidence="1">
    <location>
        <begin position="99"/>
        <end position="109"/>
    </location>
</feature>
<feature type="binding site" description="in other chain" evidence="1">
    <location>
        <position position="22"/>
    </location>
    <ligand>
        <name>ATP</name>
        <dbReference type="ChEBI" id="CHEBI:30616"/>
        <note>ligand shared between two neighboring subunits</note>
    </ligand>
</feature>
<feature type="binding site" evidence="1">
    <location>
        <position position="24"/>
    </location>
    <ligand>
        <name>Mg(2+)</name>
        <dbReference type="ChEBI" id="CHEBI:18420"/>
    </ligand>
</feature>
<feature type="binding site" evidence="1">
    <location>
        <position position="50"/>
    </location>
    <ligand>
        <name>K(+)</name>
        <dbReference type="ChEBI" id="CHEBI:29103"/>
    </ligand>
</feature>
<feature type="binding site" description="in other chain" evidence="1">
    <location>
        <position position="63"/>
    </location>
    <ligand>
        <name>L-methionine</name>
        <dbReference type="ChEBI" id="CHEBI:57844"/>
        <note>ligand shared between two neighboring subunits</note>
    </ligand>
</feature>
<feature type="binding site" description="in other chain" evidence="1">
    <location>
        <position position="99"/>
    </location>
    <ligand>
        <name>L-methionine</name>
        <dbReference type="ChEBI" id="CHEBI:57844"/>
        <note>ligand shared between two neighboring subunits</note>
    </ligand>
</feature>
<feature type="binding site" description="in other chain" evidence="1">
    <location>
        <begin position="160"/>
        <end position="162"/>
    </location>
    <ligand>
        <name>ATP</name>
        <dbReference type="ChEBI" id="CHEBI:30616"/>
        <note>ligand shared between two neighboring subunits</note>
    </ligand>
</feature>
<feature type="binding site" evidence="1">
    <location>
        <position position="235"/>
    </location>
    <ligand>
        <name>ATP</name>
        <dbReference type="ChEBI" id="CHEBI:30616"/>
        <note>ligand shared between two neighboring subunits</note>
    </ligand>
</feature>
<feature type="binding site" evidence="1">
    <location>
        <position position="235"/>
    </location>
    <ligand>
        <name>L-methionine</name>
        <dbReference type="ChEBI" id="CHEBI:57844"/>
        <note>ligand shared between two neighboring subunits</note>
    </ligand>
</feature>
<feature type="binding site" description="in other chain" evidence="1">
    <location>
        <begin position="241"/>
        <end position="242"/>
    </location>
    <ligand>
        <name>ATP</name>
        <dbReference type="ChEBI" id="CHEBI:30616"/>
        <note>ligand shared between two neighboring subunits</note>
    </ligand>
</feature>
<feature type="binding site" evidence="1">
    <location>
        <position position="258"/>
    </location>
    <ligand>
        <name>ATP</name>
        <dbReference type="ChEBI" id="CHEBI:30616"/>
        <note>ligand shared between two neighboring subunits</note>
    </ligand>
</feature>
<feature type="binding site" evidence="1">
    <location>
        <position position="262"/>
    </location>
    <ligand>
        <name>ATP</name>
        <dbReference type="ChEBI" id="CHEBI:30616"/>
        <note>ligand shared between two neighboring subunits</note>
    </ligand>
</feature>
<feature type="binding site" description="in other chain" evidence="1">
    <location>
        <position position="266"/>
    </location>
    <ligand>
        <name>L-methionine</name>
        <dbReference type="ChEBI" id="CHEBI:57844"/>
        <note>ligand shared between two neighboring subunits</note>
    </ligand>
</feature>
<keyword id="KW-0067">ATP-binding</keyword>
<keyword id="KW-0963">Cytoplasm</keyword>
<keyword id="KW-0460">Magnesium</keyword>
<keyword id="KW-0479">Metal-binding</keyword>
<keyword id="KW-0547">Nucleotide-binding</keyword>
<keyword id="KW-0554">One-carbon metabolism</keyword>
<keyword id="KW-0630">Potassium</keyword>
<keyword id="KW-1185">Reference proteome</keyword>
<keyword id="KW-0808">Transferase</keyword>
<proteinExistence type="inferred from homology"/>
<reference key="1">
    <citation type="journal article" date="1996" name="Nucleic Acids Res.">
        <title>Complete sequence analysis of the genome of the bacterium Mycoplasma pneumoniae.</title>
        <authorList>
            <person name="Himmelreich R."/>
            <person name="Hilbert H."/>
            <person name="Plagens H."/>
            <person name="Pirkl E."/>
            <person name="Li B.-C."/>
            <person name="Herrmann R."/>
        </authorList>
    </citation>
    <scope>NUCLEOTIDE SEQUENCE [LARGE SCALE GENOMIC DNA]</scope>
    <source>
        <strain>ATCC 29342 / M129 / Subtype 1</strain>
    </source>
</reference>